<comment type="function">
    <text evidence="1">Produces ATP from ADP in the presence of a proton gradient across the membrane.</text>
</comment>
<comment type="subunit">
    <text evidence="1">F-type ATPases have 2 components, CF(1) - the catalytic core - and CF(0) - the membrane proton channel. CF(1) has five subunits: alpha(3), beta(3), gamma(1), delta(1), epsilon(1). CF(0) has three main subunits: a, b and c.</text>
</comment>
<comment type="subcellular location">
    <subcellularLocation>
        <location evidence="1">Plastid</location>
        <location evidence="1">Chloroplast thylakoid membrane</location>
        <topology evidence="1">Peripheral membrane protein</topology>
    </subcellularLocation>
</comment>
<comment type="RNA editing">
    <location>
        <position position="24" evidence="2 3"/>
    </location>
    <location>
        <position position="30" evidence="2 3"/>
    </location>
    <location>
        <position position="52" evidence="2 3"/>
    </location>
    <text>The nonsense codon at position 30 is modified to a sense codon.</text>
</comment>
<comment type="similarity">
    <text evidence="1">Belongs to the ATPase epsilon chain family.</text>
</comment>
<keyword id="KW-0066">ATP synthesis</keyword>
<keyword id="KW-0139">CF(1)</keyword>
<keyword id="KW-0150">Chloroplast</keyword>
<keyword id="KW-0375">Hydrogen ion transport</keyword>
<keyword id="KW-0406">Ion transport</keyword>
<keyword id="KW-0472">Membrane</keyword>
<keyword id="KW-0934">Plastid</keyword>
<keyword id="KW-0691">RNA editing</keyword>
<keyword id="KW-0793">Thylakoid</keyword>
<keyword id="KW-0813">Transport</keyword>
<protein>
    <recommendedName>
        <fullName evidence="1">ATP synthase epsilon chain, chloroplastic</fullName>
    </recommendedName>
    <alternativeName>
        <fullName evidence="1">ATP synthase F1 sector epsilon subunit</fullName>
    </alternativeName>
    <alternativeName>
        <fullName evidence="1">F-ATPase epsilon subunit</fullName>
    </alternativeName>
</protein>
<reference key="1">
    <citation type="journal article" date="1996" name="Nucleic Acids Res.">
        <title>Extensive RNA editing of U to C in addition to C to U substitution in the rbcL transcripts of hornwort chloroplasts and the origin of RNA editing in green plants.</title>
        <authorList>
            <person name="Yoshinaga K."/>
            <person name="Iinuma H."/>
            <person name="Masuzawa T."/>
            <person name="Ueda K."/>
        </authorList>
    </citation>
    <scope>NUCLEOTIDE SEQUENCE [GENOMIC DNA]</scope>
    <source>
        <tissue>Thallus</tissue>
    </source>
</reference>
<reference key="2">
    <citation type="journal article" date="2003" name="Nucleic Acids Res.">
        <title>The complete nucleotide sequence of the hornwort (Anthoceros formosae) chloroplast genome: insight into the earliest land plants.</title>
        <authorList>
            <person name="Kugita M."/>
            <person name="Kaneko A."/>
            <person name="Yamamoto Y."/>
            <person name="Takeya Y."/>
            <person name="Matsumoto T."/>
            <person name="Yoshinaga K."/>
        </authorList>
    </citation>
    <scope>NUCLEOTIDE SEQUENCE [LARGE SCALE GENOMIC DNA]</scope>
    <scope>RNA EDITING</scope>
</reference>
<reference key="3">
    <citation type="journal article" date="2003" name="Nucleic Acids Res.">
        <title>RNA editing in hornwort chloroplasts makes more than half the genes functional.</title>
        <authorList>
            <person name="Kugita M."/>
            <person name="Yamamoto Y."/>
            <person name="Fujikawa T."/>
            <person name="Matsumoto T."/>
            <person name="Yoshinaga K."/>
        </authorList>
    </citation>
    <scope>NUCLEOTIDE SEQUENCE [MRNA]</scope>
    <scope>RNA EDITING</scope>
    <source>
        <tissue>Thallus</tissue>
    </source>
</reference>
<gene>
    <name evidence="1" type="primary">atpE</name>
</gene>
<geneLocation type="chloroplast"/>
<organism>
    <name type="scientific">Anthoceros angustus</name>
    <name type="common">Hornwort</name>
    <name type="synonym">Anthoceros formosae</name>
    <dbReference type="NCBI Taxonomy" id="48387"/>
    <lineage>
        <taxon>Eukaryota</taxon>
        <taxon>Viridiplantae</taxon>
        <taxon>Streptophyta</taxon>
        <taxon>Embryophyta</taxon>
        <taxon>Anthocerotophyta</taxon>
        <taxon>Anthocerotopsida</taxon>
        <taxon>Anthocerotidae</taxon>
        <taxon>Anthocerotales</taxon>
        <taxon>Anthocerotaceae</taxon>
        <taxon>Anthoceros</taxon>
    </lineage>
</organism>
<proteinExistence type="evidence at transcript level"/>
<evidence type="ECO:0000255" key="1">
    <source>
        <dbReference type="HAMAP-Rule" id="MF_00530"/>
    </source>
</evidence>
<evidence type="ECO:0000269" key="2">
    <source>
    </source>
</evidence>
<evidence type="ECO:0000269" key="3">
    <source>
    </source>
</evidence>
<sequence>MTLNLRVMAPNRIVWNSEVEEIVLSTNSGQIGVLPNHAPLLTALDIGIIKIRLNGEWSTMALMGGFAMIDNNGMTILVNEAEKATEINPQEARENYKMAQKDLAKAEGGKQKIEANLAFKRAKARLEAIDVISFPVSN</sequence>
<feature type="chain" id="PRO_0000188253" description="ATP synthase epsilon chain, chloroplastic">
    <location>
        <begin position="1"/>
        <end position="138"/>
    </location>
</feature>
<accession>Q31793</accession>
<dbReference type="EMBL" id="D43695">
    <property type="protein sequence ID" value="BAA07794.1"/>
    <property type="status" value="ALT_SEQ"/>
    <property type="molecule type" value="Genomic_DNA"/>
</dbReference>
<dbReference type="EMBL" id="AB086179">
    <property type="protein sequence ID" value="BAC55355.1"/>
    <property type="molecule type" value="Genomic_DNA"/>
</dbReference>
<dbReference type="EMBL" id="AB087447">
    <property type="protein sequence ID" value="BAC55450.1"/>
    <property type="molecule type" value="mRNA"/>
</dbReference>
<dbReference type="PIR" id="S71145">
    <property type="entry name" value="S71145"/>
</dbReference>
<dbReference type="RefSeq" id="NP_777419.1">
    <property type="nucleotide sequence ID" value="NC_004543.1"/>
</dbReference>
<dbReference type="SMR" id="Q31793"/>
<dbReference type="GeneID" id="2553482"/>
<dbReference type="GO" id="GO:0009535">
    <property type="term" value="C:chloroplast thylakoid membrane"/>
    <property type="evidence" value="ECO:0007669"/>
    <property type="project" value="UniProtKB-SubCell"/>
</dbReference>
<dbReference type="GO" id="GO:0045259">
    <property type="term" value="C:proton-transporting ATP synthase complex"/>
    <property type="evidence" value="ECO:0007669"/>
    <property type="project" value="UniProtKB-KW"/>
</dbReference>
<dbReference type="GO" id="GO:0005524">
    <property type="term" value="F:ATP binding"/>
    <property type="evidence" value="ECO:0007669"/>
    <property type="project" value="UniProtKB-UniRule"/>
</dbReference>
<dbReference type="GO" id="GO:0046933">
    <property type="term" value="F:proton-transporting ATP synthase activity, rotational mechanism"/>
    <property type="evidence" value="ECO:0007669"/>
    <property type="project" value="UniProtKB-UniRule"/>
</dbReference>
<dbReference type="CDD" id="cd12152">
    <property type="entry name" value="F1-ATPase_delta"/>
    <property type="match status" value="1"/>
</dbReference>
<dbReference type="FunFam" id="2.60.15.10:FF:000002">
    <property type="entry name" value="ATP synthase epsilon chain, chloroplastic"/>
    <property type="match status" value="1"/>
</dbReference>
<dbReference type="Gene3D" id="6.10.140.480">
    <property type="match status" value="1"/>
</dbReference>
<dbReference type="Gene3D" id="2.60.15.10">
    <property type="entry name" value="F0F1 ATP synthase delta/epsilon subunit, N-terminal"/>
    <property type="match status" value="1"/>
</dbReference>
<dbReference type="HAMAP" id="MF_00530">
    <property type="entry name" value="ATP_synth_epsil_bac"/>
    <property type="match status" value="1"/>
</dbReference>
<dbReference type="InterPro" id="IPR001469">
    <property type="entry name" value="ATP_synth_F1_dsu/esu"/>
</dbReference>
<dbReference type="InterPro" id="IPR020546">
    <property type="entry name" value="ATP_synth_F1_dsu/esu_N"/>
</dbReference>
<dbReference type="InterPro" id="IPR020547">
    <property type="entry name" value="ATP_synth_F1_esu_C"/>
</dbReference>
<dbReference type="InterPro" id="IPR036771">
    <property type="entry name" value="ATPsynth_dsu/esu_N"/>
</dbReference>
<dbReference type="NCBIfam" id="TIGR01216">
    <property type="entry name" value="ATP_synt_epsi"/>
    <property type="match status" value="1"/>
</dbReference>
<dbReference type="PANTHER" id="PTHR13822">
    <property type="entry name" value="ATP SYNTHASE DELTA/EPSILON CHAIN"/>
    <property type="match status" value="1"/>
</dbReference>
<dbReference type="PANTHER" id="PTHR13822:SF10">
    <property type="entry name" value="ATP SYNTHASE EPSILON CHAIN, CHLOROPLASTIC"/>
    <property type="match status" value="1"/>
</dbReference>
<dbReference type="Pfam" id="PF00401">
    <property type="entry name" value="ATP-synt_DE"/>
    <property type="match status" value="1"/>
</dbReference>
<dbReference type="Pfam" id="PF02823">
    <property type="entry name" value="ATP-synt_DE_N"/>
    <property type="match status" value="1"/>
</dbReference>
<dbReference type="SUPFAM" id="SSF51344">
    <property type="entry name" value="Epsilon subunit of F1F0-ATP synthase N-terminal domain"/>
    <property type="match status" value="1"/>
</dbReference>
<name>ATPE_ANTAG</name>